<sequence>MEIQSQPTNLTKEDVIKLIAEFQQNQCGEAQERLVDHYKNLVYSIAYRYSKGGPMHEDIIQVGMLGLLGAIRRYDYSIGNAFEPFAIPTIVGEIKKYLRDKTWGIHVPRRIKDLGGKIKLAIEELTDHLQRSPKIIEIADHLGLSEEEVLEIMDAKNNYRVSSLDDVVENASDGSSVARIESVGEVEQGYEQTERRLVLKDIFNVLNETEKSVIHYIFEENLNQKDTGERLGISQMHVSRIKRQAISKLKQAAFLDT</sequence>
<name>RPSB_BACAN</name>
<evidence type="ECO:0000250" key="1"/>
<evidence type="ECO:0000305" key="2"/>
<dbReference type="EMBL" id="AJ272497">
    <property type="protein sequence ID" value="CAB95034.1"/>
    <property type="molecule type" value="Genomic_DNA"/>
</dbReference>
<dbReference type="EMBL" id="AE016879">
    <property type="protein sequence ID" value="AAP24979.1"/>
    <property type="molecule type" value="Genomic_DNA"/>
</dbReference>
<dbReference type="EMBL" id="AE017334">
    <property type="protein sequence ID" value="AAT30095.1"/>
    <property type="molecule type" value="Genomic_DNA"/>
</dbReference>
<dbReference type="EMBL" id="AE017225">
    <property type="protein sequence ID" value="AAT53253.1"/>
    <property type="status" value="ALT_INIT"/>
    <property type="molecule type" value="Genomic_DNA"/>
</dbReference>
<dbReference type="RefSeq" id="NP_843493.1">
    <property type="nucleotide sequence ID" value="NC_003997.3"/>
</dbReference>
<dbReference type="RefSeq" id="YP_027202.1">
    <property type="nucleotide sequence ID" value="NC_005945.1"/>
</dbReference>
<dbReference type="SMR" id="Q9K5J6"/>
<dbReference type="STRING" id="261594.GBAA_0992"/>
<dbReference type="DNASU" id="1088960"/>
<dbReference type="KEGG" id="ban:BA_0992"/>
<dbReference type="KEGG" id="bar:GBAA_0992"/>
<dbReference type="KEGG" id="bat:BAS0928"/>
<dbReference type="PATRIC" id="fig|1392.230.peg.975"/>
<dbReference type="eggNOG" id="COG1191">
    <property type="taxonomic scope" value="Bacteria"/>
</dbReference>
<dbReference type="HOGENOM" id="CLU_014793_8_5_9"/>
<dbReference type="OMA" id="LMMENRM"/>
<dbReference type="Proteomes" id="UP000000427">
    <property type="component" value="Chromosome"/>
</dbReference>
<dbReference type="Proteomes" id="UP000000594">
    <property type="component" value="Chromosome"/>
</dbReference>
<dbReference type="GO" id="GO:0003677">
    <property type="term" value="F:DNA binding"/>
    <property type="evidence" value="ECO:0007669"/>
    <property type="project" value="UniProtKB-KW"/>
</dbReference>
<dbReference type="GO" id="GO:0016987">
    <property type="term" value="F:sigma factor activity"/>
    <property type="evidence" value="ECO:0000315"/>
    <property type="project" value="TIGR"/>
</dbReference>
<dbReference type="GO" id="GO:0006352">
    <property type="term" value="P:DNA-templated transcription initiation"/>
    <property type="evidence" value="ECO:0000315"/>
    <property type="project" value="TIGR"/>
</dbReference>
<dbReference type="CDD" id="cd06171">
    <property type="entry name" value="Sigma70_r4"/>
    <property type="match status" value="1"/>
</dbReference>
<dbReference type="Gene3D" id="1.20.120.1810">
    <property type="match status" value="1"/>
</dbReference>
<dbReference type="Gene3D" id="1.20.140.160">
    <property type="match status" value="1"/>
</dbReference>
<dbReference type="InterPro" id="IPR014284">
    <property type="entry name" value="RNA_pol_sigma-70_dom"/>
</dbReference>
<dbReference type="InterPro" id="IPR014288">
    <property type="entry name" value="RNA_pol_sigma-B"/>
</dbReference>
<dbReference type="InterPro" id="IPR014322">
    <property type="entry name" value="RNA_pol_sigma-B/F/G"/>
</dbReference>
<dbReference type="InterPro" id="IPR000943">
    <property type="entry name" value="RNA_pol_sigma70"/>
</dbReference>
<dbReference type="InterPro" id="IPR007627">
    <property type="entry name" value="RNA_pol_sigma70_r2"/>
</dbReference>
<dbReference type="InterPro" id="IPR007624">
    <property type="entry name" value="RNA_pol_sigma70_r3"/>
</dbReference>
<dbReference type="InterPro" id="IPR007630">
    <property type="entry name" value="RNA_pol_sigma70_r4"/>
</dbReference>
<dbReference type="InterPro" id="IPR013325">
    <property type="entry name" value="RNA_pol_sigma_r2"/>
</dbReference>
<dbReference type="InterPro" id="IPR013324">
    <property type="entry name" value="RNA_pol_sigma_r3/r4-like"/>
</dbReference>
<dbReference type="NCBIfam" id="TIGR02980">
    <property type="entry name" value="SigBFG"/>
    <property type="match status" value="1"/>
</dbReference>
<dbReference type="NCBIfam" id="TIGR02937">
    <property type="entry name" value="sigma70-ECF"/>
    <property type="match status" value="1"/>
</dbReference>
<dbReference type="NCBIfam" id="TIGR02941">
    <property type="entry name" value="Sigma_B"/>
    <property type="match status" value="1"/>
</dbReference>
<dbReference type="PANTHER" id="PTHR30385:SF4">
    <property type="entry name" value="RNA POLYMERASE SIGMA-E FACTOR"/>
    <property type="match status" value="1"/>
</dbReference>
<dbReference type="PANTHER" id="PTHR30385">
    <property type="entry name" value="SIGMA FACTOR F FLAGELLAR"/>
    <property type="match status" value="1"/>
</dbReference>
<dbReference type="Pfam" id="PF04542">
    <property type="entry name" value="Sigma70_r2"/>
    <property type="match status" value="1"/>
</dbReference>
<dbReference type="Pfam" id="PF04539">
    <property type="entry name" value="Sigma70_r3"/>
    <property type="match status" value="1"/>
</dbReference>
<dbReference type="Pfam" id="PF04545">
    <property type="entry name" value="Sigma70_r4"/>
    <property type="match status" value="1"/>
</dbReference>
<dbReference type="PRINTS" id="PR00046">
    <property type="entry name" value="SIGMA70FCT"/>
</dbReference>
<dbReference type="SUPFAM" id="SSF88946">
    <property type="entry name" value="Sigma2 domain of RNA polymerase sigma factors"/>
    <property type="match status" value="1"/>
</dbReference>
<dbReference type="SUPFAM" id="SSF88659">
    <property type="entry name" value="Sigma3 and sigma4 domains of RNA polymerase sigma factors"/>
    <property type="match status" value="2"/>
</dbReference>
<dbReference type="PROSITE" id="PS00715">
    <property type="entry name" value="SIGMA70_1"/>
    <property type="match status" value="1"/>
</dbReference>
<proteinExistence type="inferred from homology"/>
<keyword id="KW-0238">DNA-binding</keyword>
<keyword id="KW-1185">Reference proteome</keyword>
<keyword id="KW-0731">Sigma factor</keyword>
<keyword id="KW-0804">Transcription</keyword>
<keyword id="KW-0805">Transcription regulation</keyword>
<protein>
    <recommendedName>
        <fullName>RNA polymerase sigma-B factor</fullName>
    </recommendedName>
</protein>
<feature type="chain" id="PRO_0000093938" description="RNA polymerase sigma-B factor">
    <location>
        <begin position="1"/>
        <end position="257"/>
    </location>
</feature>
<feature type="DNA-binding region" description="H-T-H motif" evidence="1">
    <location>
        <begin position="224"/>
        <end position="243"/>
    </location>
</feature>
<feature type="short sequence motif" description="Polymerase core binding">
    <location>
        <begin position="58"/>
        <end position="71"/>
    </location>
</feature>
<reference key="1">
    <citation type="journal article" date="2000" name="J. Bacteriol.">
        <title>Characterization of the operon encoding the alternative sigma(B) factor from Bacillus anthracis and its role in virulence.</title>
        <authorList>
            <person name="Fouet A."/>
            <person name="Namy O."/>
            <person name="Lambert G."/>
        </authorList>
    </citation>
    <scope>NUCLEOTIDE SEQUENCE [GENOMIC DNA]</scope>
    <source>
        <strain>9131</strain>
    </source>
</reference>
<reference key="2">
    <citation type="journal article" date="2003" name="Nature">
        <title>The genome sequence of Bacillus anthracis Ames and comparison to closely related bacteria.</title>
        <authorList>
            <person name="Read T.D."/>
            <person name="Peterson S.N."/>
            <person name="Tourasse N.J."/>
            <person name="Baillie L.W."/>
            <person name="Paulsen I.T."/>
            <person name="Nelson K.E."/>
            <person name="Tettelin H."/>
            <person name="Fouts D.E."/>
            <person name="Eisen J.A."/>
            <person name="Gill S.R."/>
            <person name="Holtzapple E.K."/>
            <person name="Okstad O.A."/>
            <person name="Helgason E."/>
            <person name="Rilstone J."/>
            <person name="Wu M."/>
            <person name="Kolonay J.F."/>
            <person name="Beanan M.J."/>
            <person name="Dodson R.J."/>
            <person name="Brinkac L.M."/>
            <person name="Gwinn M.L."/>
            <person name="DeBoy R.T."/>
            <person name="Madpu R."/>
            <person name="Daugherty S.C."/>
            <person name="Durkin A.S."/>
            <person name="Haft D.H."/>
            <person name="Nelson W.C."/>
            <person name="Peterson J.D."/>
            <person name="Pop M."/>
            <person name="Khouri H.M."/>
            <person name="Radune D."/>
            <person name="Benton J.L."/>
            <person name="Mahamoud Y."/>
            <person name="Jiang L."/>
            <person name="Hance I.R."/>
            <person name="Weidman J.F."/>
            <person name="Berry K.J."/>
            <person name="Plaut R.D."/>
            <person name="Wolf A.M."/>
            <person name="Watkins K.L."/>
            <person name="Nierman W.C."/>
            <person name="Hazen A."/>
            <person name="Cline R.T."/>
            <person name="Redmond C."/>
            <person name="Thwaite J.E."/>
            <person name="White O."/>
            <person name="Salzberg S.L."/>
            <person name="Thomason B."/>
            <person name="Friedlander A.M."/>
            <person name="Koehler T.M."/>
            <person name="Hanna P.C."/>
            <person name="Kolstoe A.-B."/>
            <person name="Fraser C.M."/>
        </authorList>
    </citation>
    <scope>NUCLEOTIDE SEQUENCE [LARGE SCALE GENOMIC DNA]</scope>
    <source>
        <strain>Ames / isolate Porton</strain>
    </source>
</reference>
<reference key="3">
    <citation type="journal article" date="2009" name="J. Bacteriol.">
        <title>The complete genome sequence of Bacillus anthracis Ames 'Ancestor'.</title>
        <authorList>
            <person name="Ravel J."/>
            <person name="Jiang L."/>
            <person name="Stanley S.T."/>
            <person name="Wilson M.R."/>
            <person name="Decker R.S."/>
            <person name="Read T.D."/>
            <person name="Worsham P."/>
            <person name="Keim P.S."/>
            <person name="Salzberg S.L."/>
            <person name="Fraser-Liggett C.M."/>
            <person name="Rasko D.A."/>
        </authorList>
    </citation>
    <scope>NUCLEOTIDE SEQUENCE [LARGE SCALE GENOMIC DNA]</scope>
    <source>
        <strain>Ames ancestor</strain>
    </source>
</reference>
<reference key="4">
    <citation type="submission" date="2004-01" db="EMBL/GenBank/DDBJ databases">
        <title>Complete genome sequence of Bacillus anthracis Sterne.</title>
        <authorList>
            <person name="Brettin T.S."/>
            <person name="Bruce D."/>
            <person name="Challacombe J.F."/>
            <person name="Gilna P."/>
            <person name="Han C."/>
            <person name="Hill K."/>
            <person name="Hitchcock P."/>
            <person name="Jackson P."/>
            <person name="Keim P."/>
            <person name="Longmire J."/>
            <person name="Lucas S."/>
            <person name="Okinaka R."/>
            <person name="Richardson P."/>
            <person name="Rubin E."/>
            <person name="Tice H."/>
        </authorList>
    </citation>
    <scope>NUCLEOTIDE SEQUENCE [LARGE SCALE GENOMIC DNA]</scope>
    <source>
        <strain>Sterne</strain>
    </source>
</reference>
<accession>Q9K5J6</accession>
<accession>Q6I2H8</accession>
<accession>Q6KWA6</accession>
<comment type="function">
    <text evidence="1">Sigma factors are initiation factors that promote the attachment of RNA polymerase to specific initiation sites and are then released.</text>
</comment>
<comment type="similarity">
    <text evidence="2">Belongs to the sigma-70 factor family. SigB subfamily.</text>
</comment>
<comment type="sequence caution" evidence="2">
    <conflict type="erroneous initiation">
        <sequence resource="EMBL-CDS" id="AAT53253"/>
    </conflict>
</comment>
<gene>
    <name type="primary">sigB</name>
    <name type="ordered locus">BA_0992</name>
    <name type="ordered locus">GBAA_0992</name>
    <name type="ordered locus">BAS0928</name>
</gene>
<organism>
    <name type="scientific">Bacillus anthracis</name>
    <dbReference type="NCBI Taxonomy" id="1392"/>
    <lineage>
        <taxon>Bacteria</taxon>
        <taxon>Bacillati</taxon>
        <taxon>Bacillota</taxon>
        <taxon>Bacilli</taxon>
        <taxon>Bacillales</taxon>
        <taxon>Bacillaceae</taxon>
        <taxon>Bacillus</taxon>
        <taxon>Bacillus cereus group</taxon>
    </lineage>
</organism>